<gene>
    <name evidence="1" type="primary">rplB</name>
    <name type="ordered locus">MXAN_3302</name>
</gene>
<feature type="chain" id="PRO_0000309965" description="Large ribosomal subunit protein uL2">
    <location>
        <begin position="1"/>
        <end position="281"/>
    </location>
</feature>
<feature type="region of interest" description="Disordered" evidence="2">
    <location>
        <begin position="27"/>
        <end position="59"/>
    </location>
</feature>
<feature type="region of interest" description="Disordered" evidence="2">
    <location>
        <begin position="225"/>
        <end position="281"/>
    </location>
</feature>
<feature type="compositionally biased region" description="Basic and acidic residues" evidence="2">
    <location>
        <begin position="27"/>
        <end position="38"/>
    </location>
</feature>
<feature type="compositionally biased region" description="Basic residues" evidence="2">
    <location>
        <begin position="45"/>
        <end position="59"/>
    </location>
</feature>
<reference key="1">
    <citation type="journal article" date="2006" name="Proc. Natl. Acad. Sci. U.S.A.">
        <title>Evolution of sensory complexity recorded in a myxobacterial genome.</title>
        <authorList>
            <person name="Goldman B.S."/>
            <person name="Nierman W.C."/>
            <person name="Kaiser D."/>
            <person name="Slater S.C."/>
            <person name="Durkin A.S."/>
            <person name="Eisen J.A."/>
            <person name="Ronning C.M."/>
            <person name="Barbazuk W.B."/>
            <person name="Blanchard M."/>
            <person name="Field C."/>
            <person name="Halling C."/>
            <person name="Hinkle G."/>
            <person name="Iartchuk O."/>
            <person name="Kim H.S."/>
            <person name="Mackenzie C."/>
            <person name="Madupu R."/>
            <person name="Miller N."/>
            <person name="Shvartsbeyn A."/>
            <person name="Sullivan S.A."/>
            <person name="Vaudin M."/>
            <person name="Wiegand R."/>
            <person name="Kaplan H.B."/>
        </authorList>
    </citation>
    <scope>NUCLEOTIDE SEQUENCE [LARGE SCALE GENOMIC DNA]</scope>
    <source>
        <strain>DK1622</strain>
    </source>
</reference>
<comment type="function">
    <text evidence="1">One of the primary rRNA binding proteins. Required for association of the 30S and 50S subunits to form the 70S ribosome, for tRNA binding and peptide bond formation. It has been suggested to have peptidyltransferase activity; this is somewhat controversial. Makes several contacts with the 16S rRNA in the 70S ribosome.</text>
</comment>
<comment type="subunit">
    <text evidence="1">Part of the 50S ribosomal subunit. Forms a bridge to the 30S subunit in the 70S ribosome.</text>
</comment>
<comment type="similarity">
    <text evidence="1">Belongs to the universal ribosomal protein uL2 family.</text>
</comment>
<name>RL2_MYXXD</name>
<keyword id="KW-1185">Reference proteome</keyword>
<keyword id="KW-0687">Ribonucleoprotein</keyword>
<keyword id="KW-0689">Ribosomal protein</keyword>
<keyword id="KW-0694">RNA-binding</keyword>
<keyword id="KW-0699">rRNA-binding</keyword>
<dbReference type="EMBL" id="CP000113">
    <property type="protein sequence ID" value="ABF88953.1"/>
    <property type="molecule type" value="Genomic_DNA"/>
</dbReference>
<dbReference type="RefSeq" id="WP_011553343.1">
    <property type="nucleotide sequence ID" value="NC_008095.1"/>
</dbReference>
<dbReference type="SMR" id="Q1D772"/>
<dbReference type="STRING" id="246197.MXAN_3302"/>
<dbReference type="EnsemblBacteria" id="ABF88953">
    <property type="protein sequence ID" value="ABF88953"/>
    <property type="gene ID" value="MXAN_3302"/>
</dbReference>
<dbReference type="GeneID" id="41360655"/>
<dbReference type="KEGG" id="mxa:MXAN_3302"/>
<dbReference type="eggNOG" id="COG0090">
    <property type="taxonomic scope" value="Bacteria"/>
</dbReference>
<dbReference type="HOGENOM" id="CLU_036235_2_1_7"/>
<dbReference type="OrthoDB" id="9778722at2"/>
<dbReference type="Proteomes" id="UP000002402">
    <property type="component" value="Chromosome"/>
</dbReference>
<dbReference type="GO" id="GO:0015934">
    <property type="term" value="C:large ribosomal subunit"/>
    <property type="evidence" value="ECO:0007669"/>
    <property type="project" value="InterPro"/>
</dbReference>
<dbReference type="GO" id="GO:0019843">
    <property type="term" value="F:rRNA binding"/>
    <property type="evidence" value="ECO:0007669"/>
    <property type="project" value="UniProtKB-UniRule"/>
</dbReference>
<dbReference type="GO" id="GO:0003735">
    <property type="term" value="F:structural constituent of ribosome"/>
    <property type="evidence" value="ECO:0007669"/>
    <property type="project" value="InterPro"/>
</dbReference>
<dbReference type="GO" id="GO:0016740">
    <property type="term" value="F:transferase activity"/>
    <property type="evidence" value="ECO:0007669"/>
    <property type="project" value="InterPro"/>
</dbReference>
<dbReference type="GO" id="GO:0002181">
    <property type="term" value="P:cytoplasmic translation"/>
    <property type="evidence" value="ECO:0007669"/>
    <property type="project" value="TreeGrafter"/>
</dbReference>
<dbReference type="FunFam" id="2.30.30.30:FF:000001">
    <property type="entry name" value="50S ribosomal protein L2"/>
    <property type="match status" value="1"/>
</dbReference>
<dbReference type="FunFam" id="2.40.50.140:FF:000003">
    <property type="entry name" value="50S ribosomal protein L2"/>
    <property type="match status" value="1"/>
</dbReference>
<dbReference type="FunFam" id="4.10.950.10:FF:000001">
    <property type="entry name" value="50S ribosomal protein L2"/>
    <property type="match status" value="1"/>
</dbReference>
<dbReference type="Gene3D" id="2.30.30.30">
    <property type="match status" value="1"/>
</dbReference>
<dbReference type="Gene3D" id="2.40.50.140">
    <property type="entry name" value="Nucleic acid-binding proteins"/>
    <property type="match status" value="1"/>
</dbReference>
<dbReference type="Gene3D" id="4.10.950.10">
    <property type="entry name" value="Ribosomal protein L2, domain 3"/>
    <property type="match status" value="1"/>
</dbReference>
<dbReference type="HAMAP" id="MF_01320_B">
    <property type="entry name" value="Ribosomal_uL2_B"/>
    <property type="match status" value="1"/>
</dbReference>
<dbReference type="InterPro" id="IPR012340">
    <property type="entry name" value="NA-bd_OB-fold"/>
</dbReference>
<dbReference type="InterPro" id="IPR014722">
    <property type="entry name" value="Rib_uL2_dom2"/>
</dbReference>
<dbReference type="InterPro" id="IPR002171">
    <property type="entry name" value="Ribosomal_uL2"/>
</dbReference>
<dbReference type="InterPro" id="IPR005880">
    <property type="entry name" value="Ribosomal_uL2_bac/org-type"/>
</dbReference>
<dbReference type="InterPro" id="IPR022669">
    <property type="entry name" value="Ribosomal_uL2_C"/>
</dbReference>
<dbReference type="InterPro" id="IPR014726">
    <property type="entry name" value="Ribosomal_uL2_dom3"/>
</dbReference>
<dbReference type="InterPro" id="IPR022666">
    <property type="entry name" value="Ribosomal_uL2_RNA-bd_dom"/>
</dbReference>
<dbReference type="InterPro" id="IPR008991">
    <property type="entry name" value="Translation_prot_SH3-like_sf"/>
</dbReference>
<dbReference type="NCBIfam" id="TIGR01171">
    <property type="entry name" value="rplB_bact"/>
    <property type="match status" value="1"/>
</dbReference>
<dbReference type="PANTHER" id="PTHR13691:SF5">
    <property type="entry name" value="LARGE RIBOSOMAL SUBUNIT PROTEIN UL2M"/>
    <property type="match status" value="1"/>
</dbReference>
<dbReference type="PANTHER" id="PTHR13691">
    <property type="entry name" value="RIBOSOMAL PROTEIN L2"/>
    <property type="match status" value="1"/>
</dbReference>
<dbReference type="Pfam" id="PF00181">
    <property type="entry name" value="Ribosomal_L2"/>
    <property type="match status" value="1"/>
</dbReference>
<dbReference type="Pfam" id="PF03947">
    <property type="entry name" value="Ribosomal_L2_C"/>
    <property type="match status" value="1"/>
</dbReference>
<dbReference type="PIRSF" id="PIRSF002158">
    <property type="entry name" value="Ribosomal_L2"/>
    <property type="match status" value="1"/>
</dbReference>
<dbReference type="SMART" id="SM01383">
    <property type="entry name" value="Ribosomal_L2"/>
    <property type="match status" value="1"/>
</dbReference>
<dbReference type="SMART" id="SM01382">
    <property type="entry name" value="Ribosomal_L2_C"/>
    <property type="match status" value="1"/>
</dbReference>
<dbReference type="SUPFAM" id="SSF50249">
    <property type="entry name" value="Nucleic acid-binding proteins"/>
    <property type="match status" value="1"/>
</dbReference>
<dbReference type="SUPFAM" id="SSF50104">
    <property type="entry name" value="Translation proteins SH3-like domain"/>
    <property type="match status" value="1"/>
</dbReference>
<sequence>MGIKKYKPTSAARRLMTVSDFADITKDSPEKSLTEPLKRSGGRNVHGHITRRHQGGGHKRRYRVIDFKRRDKDGVPAKVVAVEYDPNRTANIALLHYADGEKRYILAPVGLSVGDTVFAGEGADIRPGNSLPLQNIPVGTVIHNVELKPGRGAQVIRSAGTSGQLMAKEDRYAQVRMPSGTVRKVLIECRATVGQVGNIEHEIIRIGKAGKSRWLGIRPTVRGLAMNPVDHPHGGGEGKSGQGNPHPVSPWGKKTKGLTTRTNKRTDKFIVSGRRQGARSQ</sequence>
<protein>
    <recommendedName>
        <fullName evidence="1">Large ribosomal subunit protein uL2</fullName>
    </recommendedName>
    <alternativeName>
        <fullName evidence="3">50S ribosomal protein L2</fullName>
    </alternativeName>
</protein>
<accession>Q1D772</accession>
<proteinExistence type="inferred from homology"/>
<evidence type="ECO:0000255" key="1">
    <source>
        <dbReference type="HAMAP-Rule" id="MF_01320"/>
    </source>
</evidence>
<evidence type="ECO:0000256" key="2">
    <source>
        <dbReference type="SAM" id="MobiDB-lite"/>
    </source>
</evidence>
<evidence type="ECO:0000305" key="3"/>
<organism>
    <name type="scientific">Myxococcus xanthus (strain DK1622)</name>
    <dbReference type="NCBI Taxonomy" id="246197"/>
    <lineage>
        <taxon>Bacteria</taxon>
        <taxon>Pseudomonadati</taxon>
        <taxon>Myxococcota</taxon>
        <taxon>Myxococcia</taxon>
        <taxon>Myxococcales</taxon>
        <taxon>Cystobacterineae</taxon>
        <taxon>Myxococcaceae</taxon>
        <taxon>Myxococcus</taxon>
    </lineage>
</organism>